<protein>
    <recommendedName>
        <fullName evidence="1">Fatty acid oxidation complex subunit alpha</fullName>
    </recommendedName>
    <domain>
        <recommendedName>
            <fullName evidence="1">Enoyl-CoA hydratase/3-hydroxybutyryl-CoA epimerase</fullName>
            <ecNumber evidence="1">4.2.1.17</ecNumber>
            <ecNumber evidence="1">5.1.2.3</ecNumber>
        </recommendedName>
    </domain>
    <domain>
        <recommendedName>
            <fullName evidence="1">3-hydroxyacyl-CoA dehydrogenase</fullName>
            <ecNumber evidence="1">1.1.1.35</ecNumber>
        </recommendedName>
    </domain>
</protein>
<feature type="chain" id="PRO_1000185951" description="Fatty acid oxidation complex subunit alpha">
    <location>
        <begin position="1"/>
        <end position="715"/>
    </location>
</feature>
<feature type="region of interest" description="Enoyl-CoA hydratase" evidence="1">
    <location>
        <begin position="1"/>
        <end position="190"/>
    </location>
</feature>
<feature type="region of interest" description="3-hydroxyacyl-CoA dehydrogenase" evidence="1">
    <location>
        <begin position="306"/>
        <end position="715"/>
    </location>
</feature>
<feature type="site" description="Important for catalytic activity" evidence="1">
    <location>
        <position position="118"/>
    </location>
</feature>
<feature type="site" description="Important for catalytic activity" evidence="1">
    <location>
        <position position="140"/>
    </location>
</feature>
<keyword id="KW-0963">Cytoplasm</keyword>
<keyword id="KW-0276">Fatty acid metabolism</keyword>
<keyword id="KW-0413">Isomerase</keyword>
<keyword id="KW-0442">Lipid degradation</keyword>
<keyword id="KW-0443">Lipid metabolism</keyword>
<keyword id="KW-0456">Lyase</keyword>
<keyword id="KW-0511">Multifunctional enzyme</keyword>
<keyword id="KW-0520">NAD</keyword>
<keyword id="KW-0560">Oxidoreductase</keyword>
<evidence type="ECO:0000255" key="1">
    <source>
        <dbReference type="HAMAP-Rule" id="MF_01617"/>
    </source>
</evidence>
<proteinExistence type="inferred from homology"/>
<gene>
    <name evidence="1" type="primary">fadJ</name>
    <name type="ordered locus">SeHA_C2630</name>
</gene>
<comment type="function">
    <text evidence="1">Catalyzes the formation of a hydroxyacyl-CoA by addition of water on enoyl-CoA. Also exhibits 3-hydroxyacyl-CoA epimerase and 3-hydroxyacyl-CoA dehydrogenase activities.</text>
</comment>
<comment type="catalytic activity">
    <reaction evidence="1">
        <text>a (3S)-3-hydroxyacyl-CoA = a (2E)-enoyl-CoA + H2O</text>
        <dbReference type="Rhea" id="RHEA:16105"/>
        <dbReference type="ChEBI" id="CHEBI:15377"/>
        <dbReference type="ChEBI" id="CHEBI:57318"/>
        <dbReference type="ChEBI" id="CHEBI:58856"/>
        <dbReference type="EC" id="4.2.1.17"/>
    </reaction>
</comment>
<comment type="catalytic activity">
    <reaction evidence="1">
        <text>a 4-saturated-(3S)-3-hydroxyacyl-CoA = a (3E)-enoyl-CoA + H2O</text>
        <dbReference type="Rhea" id="RHEA:20724"/>
        <dbReference type="ChEBI" id="CHEBI:15377"/>
        <dbReference type="ChEBI" id="CHEBI:58521"/>
        <dbReference type="ChEBI" id="CHEBI:137480"/>
        <dbReference type="EC" id="4.2.1.17"/>
    </reaction>
</comment>
<comment type="catalytic activity">
    <reaction evidence="1">
        <text>a (3S)-3-hydroxyacyl-CoA + NAD(+) = a 3-oxoacyl-CoA + NADH + H(+)</text>
        <dbReference type="Rhea" id="RHEA:22432"/>
        <dbReference type="ChEBI" id="CHEBI:15378"/>
        <dbReference type="ChEBI" id="CHEBI:57318"/>
        <dbReference type="ChEBI" id="CHEBI:57540"/>
        <dbReference type="ChEBI" id="CHEBI:57945"/>
        <dbReference type="ChEBI" id="CHEBI:90726"/>
        <dbReference type="EC" id="1.1.1.35"/>
    </reaction>
</comment>
<comment type="catalytic activity">
    <reaction evidence="1">
        <text>(3S)-3-hydroxybutanoyl-CoA = (3R)-3-hydroxybutanoyl-CoA</text>
        <dbReference type="Rhea" id="RHEA:21760"/>
        <dbReference type="ChEBI" id="CHEBI:57315"/>
        <dbReference type="ChEBI" id="CHEBI:57316"/>
        <dbReference type="EC" id="5.1.2.3"/>
    </reaction>
</comment>
<comment type="pathway">
    <text evidence="1">Lipid metabolism; fatty acid beta-oxidation.</text>
</comment>
<comment type="subunit">
    <text evidence="1">Heterotetramer of two alpha chains (FadJ) and two beta chains (FadI).</text>
</comment>
<comment type="subcellular location">
    <subcellularLocation>
        <location evidence="1">Cytoplasm</location>
    </subcellularLocation>
</comment>
<comment type="similarity">
    <text evidence="1">In the N-terminal section; belongs to the enoyl-CoA hydratase/isomerase family.</text>
</comment>
<comment type="similarity">
    <text evidence="1">In the central section; belongs to the 3-hydroxyacyl-CoA dehydrogenase family.</text>
</comment>
<sequence>MTTTSAFMLNVRLDNVAVVAIDVPGEKVNTLKAEFAAQVRAILKQIRENKALQGVVFISAKADNFIAGADINMIGHCQNAQEAETLARQGQQLMAEIQALPVPVIAAIHGACLGGGLEMALACHRRICTDDVKTVLGLPEVQLGLLPGSGGTQRLPRLVGVSTALDMILTGKQLRARQALKAGLVDDVVPQTILLEAAVELAKKERLAQRTLPVRERILAGPLGRALLFRLVRKKTAQKTQGNYPATERIIDVIETGLAQGSSSGYDAEARAFGELAMTPQSQALRAVFFASTEVKKDPGSDAPPGPLNSVGILGGGLMGGGIAWVTACKGGLPVRIKDINTQGINHALKYSWDLLETKVRRRHIKASERDKQLALISGSTDYRGFSHRDLVIEAVFEDLPLKQQMVAEVEQNCAAHTIFASNTSSLPIGDIAANAARPEQVIGLHFFSPVEKMPLVEVIPHASTSAQTIATTVKLAKKQGKTPIVVSDKAGFYVNRILAPYINEAIRMLTEGERVEHIDAALVKFGFPVGPIQLLDEVGIDTGTKIIPVLEAAYGERFSAPANVVASILNDDRKGRKNGRGFYLYGEKGRKSKKQVDPAIYKLIGVQGQSRLSAQQVAERCVMLMLNEAARCFDEKVIRSARDGDIGAVFGIGFPPFLGGPFRYMDALGPGEMVATLQRLAALYGPRYAPCEQLVRMAERREHFWTNGETDQGN</sequence>
<dbReference type="EC" id="4.2.1.17" evidence="1"/>
<dbReference type="EC" id="5.1.2.3" evidence="1"/>
<dbReference type="EC" id="1.1.1.35" evidence="1"/>
<dbReference type="EMBL" id="CP001120">
    <property type="protein sequence ID" value="ACF69849.1"/>
    <property type="molecule type" value="Genomic_DNA"/>
</dbReference>
<dbReference type="RefSeq" id="WP_000214145.1">
    <property type="nucleotide sequence ID" value="NC_011083.1"/>
</dbReference>
<dbReference type="SMR" id="B4TCA8"/>
<dbReference type="KEGG" id="seh:SeHA_C2630"/>
<dbReference type="HOGENOM" id="CLU_009834_16_3_6"/>
<dbReference type="UniPathway" id="UPA00659"/>
<dbReference type="Proteomes" id="UP000001866">
    <property type="component" value="Chromosome"/>
</dbReference>
<dbReference type="GO" id="GO:0005737">
    <property type="term" value="C:cytoplasm"/>
    <property type="evidence" value="ECO:0007669"/>
    <property type="project" value="UniProtKB-SubCell"/>
</dbReference>
<dbReference type="GO" id="GO:0008692">
    <property type="term" value="F:3-hydroxybutyryl-CoA epimerase activity"/>
    <property type="evidence" value="ECO:0007669"/>
    <property type="project" value="UniProtKB-UniRule"/>
</dbReference>
<dbReference type="GO" id="GO:0004300">
    <property type="term" value="F:enoyl-CoA hydratase activity"/>
    <property type="evidence" value="ECO:0007669"/>
    <property type="project" value="UniProtKB-UniRule"/>
</dbReference>
<dbReference type="GO" id="GO:0016509">
    <property type="term" value="F:long-chain-3-hydroxyacyl-CoA dehydrogenase activity"/>
    <property type="evidence" value="ECO:0007669"/>
    <property type="project" value="TreeGrafter"/>
</dbReference>
<dbReference type="GO" id="GO:0070403">
    <property type="term" value="F:NAD+ binding"/>
    <property type="evidence" value="ECO:0007669"/>
    <property type="project" value="InterPro"/>
</dbReference>
<dbReference type="GO" id="GO:0006635">
    <property type="term" value="P:fatty acid beta-oxidation"/>
    <property type="evidence" value="ECO:0007669"/>
    <property type="project" value="UniProtKB-UniRule"/>
</dbReference>
<dbReference type="CDD" id="cd06558">
    <property type="entry name" value="crotonase-like"/>
    <property type="match status" value="1"/>
</dbReference>
<dbReference type="FunFam" id="1.10.1040.50:FF:000003">
    <property type="entry name" value="Fatty acid oxidation complex subunit alpha"/>
    <property type="match status" value="1"/>
</dbReference>
<dbReference type="FunFam" id="3.90.226.10:FF:000011">
    <property type="entry name" value="Fatty acid oxidation complex subunit alpha"/>
    <property type="match status" value="1"/>
</dbReference>
<dbReference type="FunFam" id="3.40.50.720:FF:000009">
    <property type="entry name" value="Fatty oxidation complex, alpha subunit"/>
    <property type="match status" value="1"/>
</dbReference>
<dbReference type="Gene3D" id="1.10.1040.50">
    <property type="match status" value="1"/>
</dbReference>
<dbReference type="Gene3D" id="3.90.226.10">
    <property type="entry name" value="2-enoyl-CoA Hydratase, Chain A, domain 1"/>
    <property type="match status" value="1"/>
</dbReference>
<dbReference type="Gene3D" id="3.40.50.720">
    <property type="entry name" value="NAD(P)-binding Rossmann-like Domain"/>
    <property type="match status" value="1"/>
</dbReference>
<dbReference type="HAMAP" id="MF_01617">
    <property type="entry name" value="FadJ"/>
    <property type="match status" value="1"/>
</dbReference>
<dbReference type="InterPro" id="IPR006180">
    <property type="entry name" value="3-OHacyl-CoA_DH_CS"/>
</dbReference>
<dbReference type="InterPro" id="IPR006176">
    <property type="entry name" value="3-OHacyl-CoA_DH_NAD-bd"/>
</dbReference>
<dbReference type="InterPro" id="IPR006108">
    <property type="entry name" value="3HC_DH_C"/>
</dbReference>
<dbReference type="InterPro" id="IPR008927">
    <property type="entry name" value="6-PGluconate_DH-like_C_sf"/>
</dbReference>
<dbReference type="InterPro" id="IPR029045">
    <property type="entry name" value="ClpP/crotonase-like_dom_sf"/>
</dbReference>
<dbReference type="InterPro" id="IPR001753">
    <property type="entry name" value="Enoyl-CoA_hydra/iso"/>
</dbReference>
<dbReference type="InterPro" id="IPR050136">
    <property type="entry name" value="FA_oxidation_alpha_subunit"/>
</dbReference>
<dbReference type="InterPro" id="IPR012802">
    <property type="entry name" value="FadJ"/>
</dbReference>
<dbReference type="InterPro" id="IPR036291">
    <property type="entry name" value="NAD(P)-bd_dom_sf"/>
</dbReference>
<dbReference type="NCBIfam" id="TIGR02440">
    <property type="entry name" value="FadJ"/>
    <property type="match status" value="1"/>
</dbReference>
<dbReference type="NCBIfam" id="NF008363">
    <property type="entry name" value="PRK11154.1"/>
    <property type="match status" value="1"/>
</dbReference>
<dbReference type="PANTHER" id="PTHR43612">
    <property type="entry name" value="TRIFUNCTIONAL ENZYME SUBUNIT ALPHA"/>
    <property type="match status" value="1"/>
</dbReference>
<dbReference type="PANTHER" id="PTHR43612:SF3">
    <property type="entry name" value="TRIFUNCTIONAL ENZYME SUBUNIT ALPHA, MITOCHONDRIAL"/>
    <property type="match status" value="1"/>
</dbReference>
<dbReference type="Pfam" id="PF00725">
    <property type="entry name" value="3HCDH"/>
    <property type="match status" value="1"/>
</dbReference>
<dbReference type="Pfam" id="PF02737">
    <property type="entry name" value="3HCDH_N"/>
    <property type="match status" value="1"/>
</dbReference>
<dbReference type="Pfam" id="PF00378">
    <property type="entry name" value="ECH_1"/>
    <property type="match status" value="1"/>
</dbReference>
<dbReference type="SUPFAM" id="SSF48179">
    <property type="entry name" value="6-phosphogluconate dehydrogenase C-terminal domain-like"/>
    <property type="match status" value="2"/>
</dbReference>
<dbReference type="SUPFAM" id="SSF52096">
    <property type="entry name" value="ClpP/crotonase"/>
    <property type="match status" value="1"/>
</dbReference>
<dbReference type="SUPFAM" id="SSF51735">
    <property type="entry name" value="NAD(P)-binding Rossmann-fold domains"/>
    <property type="match status" value="1"/>
</dbReference>
<dbReference type="PROSITE" id="PS00067">
    <property type="entry name" value="3HCDH"/>
    <property type="match status" value="1"/>
</dbReference>
<organism>
    <name type="scientific">Salmonella heidelberg (strain SL476)</name>
    <dbReference type="NCBI Taxonomy" id="454169"/>
    <lineage>
        <taxon>Bacteria</taxon>
        <taxon>Pseudomonadati</taxon>
        <taxon>Pseudomonadota</taxon>
        <taxon>Gammaproteobacteria</taxon>
        <taxon>Enterobacterales</taxon>
        <taxon>Enterobacteriaceae</taxon>
        <taxon>Salmonella</taxon>
    </lineage>
</organism>
<accession>B4TCA8</accession>
<reference key="1">
    <citation type="journal article" date="2011" name="J. Bacteriol.">
        <title>Comparative genomics of 28 Salmonella enterica isolates: evidence for CRISPR-mediated adaptive sublineage evolution.</title>
        <authorList>
            <person name="Fricke W.F."/>
            <person name="Mammel M.K."/>
            <person name="McDermott P.F."/>
            <person name="Tartera C."/>
            <person name="White D.G."/>
            <person name="Leclerc J.E."/>
            <person name="Ravel J."/>
            <person name="Cebula T.A."/>
        </authorList>
    </citation>
    <scope>NUCLEOTIDE SEQUENCE [LARGE SCALE GENOMIC DNA]</scope>
    <source>
        <strain>SL476</strain>
    </source>
</reference>
<name>FADJ_SALHS</name>